<dbReference type="EC" id="2.3.2.36" evidence="20 23"/>
<dbReference type="EMBL" id="AF124145">
    <property type="protein sequence ID" value="AAD56722.1"/>
    <property type="molecule type" value="mRNA"/>
</dbReference>
<dbReference type="EMBL" id="BC069197">
    <property type="protein sequence ID" value="AAH69197.1"/>
    <property type="molecule type" value="mRNA"/>
</dbReference>
<dbReference type="EMBL" id="L35233">
    <property type="protein sequence ID" value="AAA79362.1"/>
    <property type="status" value="ALT_FRAME"/>
    <property type="molecule type" value="mRNA"/>
</dbReference>
<dbReference type="EMBL" id="M63175">
    <property type="protein sequence ID" value="AAA36671.1"/>
    <property type="status" value="ALT_SEQ"/>
    <property type="molecule type" value="mRNA"/>
</dbReference>
<dbReference type="CCDS" id="CCDS10758.1"/>
<dbReference type="PIR" id="A39877">
    <property type="entry name" value="A39877"/>
</dbReference>
<dbReference type="RefSeq" id="NP_001135.3">
    <property type="nucleotide sequence ID" value="NM_001144.5"/>
</dbReference>
<dbReference type="RefSeq" id="NP_001310441.1">
    <property type="nucleotide sequence ID" value="NM_001323512.1"/>
</dbReference>
<dbReference type="PDB" id="2EJS">
    <property type="method" value="NMR"/>
    <property type="chains" value="A=452-502"/>
</dbReference>
<dbReference type="PDB" id="2LVN">
    <property type="method" value="NMR"/>
    <property type="chains" value="C=453-504"/>
</dbReference>
<dbReference type="PDB" id="2LVO">
    <property type="method" value="NMR"/>
    <property type="chains" value="C=453-504"/>
</dbReference>
<dbReference type="PDB" id="2LVP">
    <property type="method" value="NMR"/>
    <property type="chains" value="C=453-504"/>
</dbReference>
<dbReference type="PDB" id="2LVQ">
    <property type="method" value="NMR"/>
    <property type="chains" value="D=453-504"/>
</dbReference>
<dbReference type="PDB" id="2LXH">
    <property type="method" value="NMR"/>
    <property type="chains" value="C=313-393"/>
</dbReference>
<dbReference type="PDB" id="2LXP">
    <property type="method" value="NMR"/>
    <property type="chains" value="B=574-600, C=327-384"/>
</dbReference>
<dbReference type="PDB" id="3FSH">
    <property type="method" value="X-ray"/>
    <property type="resolution" value="2.76 A"/>
    <property type="chains" value="C=574-601"/>
</dbReference>
<dbReference type="PDB" id="3H8K">
    <property type="method" value="X-ray"/>
    <property type="resolution" value="1.80 A"/>
    <property type="chains" value="B=573-600"/>
</dbReference>
<dbReference type="PDB" id="3TIW">
    <property type="method" value="X-ray"/>
    <property type="resolution" value="1.80 A"/>
    <property type="chains" value="C/D=622-640"/>
</dbReference>
<dbReference type="PDB" id="4G3O">
    <property type="method" value="X-ray"/>
    <property type="resolution" value="1.60 A"/>
    <property type="chains" value="A=456-498"/>
</dbReference>
<dbReference type="PDB" id="4LAD">
    <property type="method" value="X-ray"/>
    <property type="resolution" value="2.30 A"/>
    <property type="chains" value="B=313-393, B=574-600"/>
</dbReference>
<dbReference type="PDB" id="8T0S">
    <property type="method" value="X-ray"/>
    <property type="resolution" value="1.95 A"/>
    <property type="chains" value="B=574-600"/>
</dbReference>
<dbReference type="PDBsum" id="2EJS"/>
<dbReference type="PDBsum" id="2LVN"/>
<dbReference type="PDBsum" id="2LVO"/>
<dbReference type="PDBsum" id="2LVP"/>
<dbReference type="PDBsum" id="2LVQ"/>
<dbReference type="PDBsum" id="2LXH"/>
<dbReference type="PDBsum" id="2LXP"/>
<dbReference type="PDBsum" id="3FSH"/>
<dbReference type="PDBsum" id="3H8K"/>
<dbReference type="PDBsum" id="3TIW"/>
<dbReference type="PDBsum" id="4G3O"/>
<dbReference type="PDBsum" id="4LAD"/>
<dbReference type="PDBsum" id="8T0S"/>
<dbReference type="BMRB" id="Q9UKV5"/>
<dbReference type="SMR" id="Q9UKV5"/>
<dbReference type="BioGRID" id="106764">
    <property type="interactions" value="275"/>
</dbReference>
<dbReference type="ComplexPortal" id="CPX-8134">
    <property type="entry name" value="VCP-AMFR AAA ATPase complex"/>
</dbReference>
<dbReference type="CORUM" id="Q9UKV5"/>
<dbReference type="DIP" id="DIP-29060N"/>
<dbReference type="FunCoup" id="Q9UKV5">
    <property type="interactions" value="856"/>
</dbReference>
<dbReference type="IntAct" id="Q9UKV5">
    <property type="interactions" value="101"/>
</dbReference>
<dbReference type="MINT" id="Q9UKV5"/>
<dbReference type="STRING" id="9606.ENSP00000290649"/>
<dbReference type="TCDB" id="8.A.183.1.1">
    <property type="family name" value="the rela-associated inhibitor (rai) family"/>
</dbReference>
<dbReference type="iPTMnet" id="Q9UKV5"/>
<dbReference type="PhosphoSitePlus" id="Q9UKV5"/>
<dbReference type="SwissPalm" id="Q9UKV5"/>
<dbReference type="BioMuta" id="AMFR"/>
<dbReference type="DMDM" id="34922250"/>
<dbReference type="jPOST" id="Q9UKV5"/>
<dbReference type="MassIVE" id="Q9UKV5"/>
<dbReference type="PaxDb" id="9606-ENSP00000290649"/>
<dbReference type="PeptideAtlas" id="Q9UKV5"/>
<dbReference type="ProteomicsDB" id="54350"/>
<dbReference type="ProteomicsDB" id="84893"/>
<dbReference type="Pumba" id="Q9UKV5"/>
<dbReference type="Antibodypedia" id="14770">
    <property type="antibodies" value="289 antibodies from 31 providers"/>
</dbReference>
<dbReference type="DNASU" id="267"/>
<dbReference type="Ensembl" id="ENST00000290649.10">
    <property type="protein sequence ID" value="ENSP00000290649.5"/>
    <property type="gene ID" value="ENSG00000159461.15"/>
</dbReference>
<dbReference type="GeneID" id="267"/>
<dbReference type="KEGG" id="hsa:267"/>
<dbReference type="MANE-Select" id="ENST00000290649.10">
    <property type="protein sequence ID" value="ENSP00000290649.5"/>
    <property type="RefSeq nucleotide sequence ID" value="NM_001144.6"/>
    <property type="RefSeq protein sequence ID" value="NP_001135.3"/>
</dbReference>
<dbReference type="UCSC" id="uc002eiy.4">
    <property type="organism name" value="human"/>
</dbReference>
<dbReference type="AGR" id="HGNC:463"/>
<dbReference type="CTD" id="267"/>
<dbReference type="DisGeNET" id="267"/>
<dbReference type="GeneCards" id="AMFR"/>
<dbReference type="HGNC" id="HGNC:463">
    <property type="gene designation" value="AMFR"/>
</dbReference>
<dbReference type="HPA" id="ENSG00000159461">
    <property type="expression patterns" value="Low tissue specificity"/>
</dbReference>
<dbReference type="MalaCards" id="AMFR"/>
<dbReference type="MIM" id="603243">
    <property type="type" value="gene"/>
</dbReference>
<dbReference type="MIM" id="620379">
    <property type="type" value="phenotype"/>
</dbReference>
<dbReference type="neXtProt" id="NX_Q9UKV5"/>
<dbReference type="OpenTargets" id="ENSG00000159461"/>
<dbReference type="PharmGKB" id="PA24768"/>
<dbReference type="VEuPathDB" id="HostDB:ENSG00000159461"/>
<dbReference type="eggNOG" id="KOG0802">
    <property type="taxonomic scope" value="Eukaryota"/>
</dbReference>
<dbReference type="GeneTree" id="ENSGT00940000156482"/>
<dbReference type="HOGENOM" id="CLU_015061_0_0_1"/>
<dbReference type="InParanoid" id="Q9UKV5"/>
<dbReference type="OMA" id="EPFCIWT"/>
<dbReference type="OrthoDB" id="3824970at2759"/>
<dbReference type="PAN-GO" id="Q9UKV5">
    <property type="GO annotations" value="7 GO annotations based on evolutionary models"/>
</dbReference>
<dbReference type="PhylomeDB" id="Q9UKV5"/>
<dbReference type="TreeFam" id="TF320052"/>
<dbReference type="BRENDA" id="2.3.2.27">
    <property type="organism ID" value="2681"/>
</dbReference>
<dbReference type="PathwayCommons" id="Q9UKV5"/>
<dbReference type="Reactome" id="R-HSA-532668">
    <property type="pathway name" value="N-glycan trimming in the ER and Calnexin/Calreticulin cycle"/>
</dbReference>
<dbReference type="Reactome" id="R-HSA-901032">
    <property type="pathway name" value="ER Quality Control Compartment (ERQC)"/>
</dbReference>
<dbReference type="SignaLink" id="Q9UKV5"/>
<dbReference type="SIGNOR" id="Q9UKV5"/>
<dbReference type="UniPathway" id="UPA00143"/>
<dbReference type="BioGRID-ORCS" id="267">
    <property type="hits" value="30 hits in 1191 CRISPR screens"/>
</dbReference>
<dbReference type="ChiTaRS" id="AMFR">
    <property type="organism name" value="human"/>
</dbReference>
<dbReference type="EvolutionaryTrace" id="Q9UKV5"/>
<dbReference type="GeneWiki" id="AMFR"/>
<dbReference type="GenomeRNAi" id="267"/>
<dbReference type="Pharos" id="Q9UKV5">
    <property type="development level" value="Tbio"/>
</dbReference>
<dbReference type="PRO" id="PR:Q9UKV5"/>
<dbReference type="Proteomes" id="UP000005640">
    <property type="component" value="Chromosome 16"/>
</dbReference>
<dbReference type="RNAct" id="Q9UKV5">
    <property type="molecule type" value="protein"/>
</dbReference>
<dbReference type="Bgee" id="ENSG00000159461">
    <property type="expression patterns" value="Expressed in stromal cell of endometrium and 200 other cell types or tissues"/>
</dbReference>
<dbReference type="ExpressionAtlas" id="Q9UKV5">
    <property type="expression patterns" value="baseline and differential"/>
</dbReference>
<dbReference type="GO" id="GO:0005829">
    <property type="term" value="C:cytosol"/>
    <property type="evidence" value="ECO:0000318"/>
    <property type="project" value="GO_Central"/>
</dbReference>
<dbReference type="GO" id="GO:0030425">
    <property type="term" value="C:dendrite"/>
    <property type="evidence" value="ECO:0007669"/>
    <property type="project" value="Ensembl"/>
</dbReference>
<dbReference type="GO" id="GO:0036513">
    <property type="term" value="C:Derlin-1 retrotranslocation complex"/>
    <property type="evidence" value="ECO:0000314"/>
    <property type="project" value="UniProtKB"/>
</dbReference>
<dbReference type="GO" id="GO:0005783">
    <property type="term" value="C:endoplasmic reticulum"/>
    <property type="evidence" value="ECO:0000314"/>
    <property type="project" value="UniProtKB"/>
</dbReference>
<dbReference type="GO" id="GO:0005789">
    <property type="term" value="C:endoplasmic reticulum membrane"/>
    <property type="evidence" value="ECO:0000314"/>
    <property type="project" value="UniProtKB"/>
</dbReference>
<dbReference type="GO" id="GO:0044322">
    <property type="term" value="C:endoplasmic reticulum quality control compartment"/>
    <property type="evidence" value="ECO:0007669"/>
    <property type="project" value="GOC"/>
</dbReference>
<dbReference type="GO" id="GO:0005794">
    <property type="term" value="C:Golgi apparatus"/>
    <property type="evidence" value="ECO:0000314"/>
    <property type="project" value="HPA"/>
</dbReference>
<dbReference type="GO" id="GO:0030426">
    <property type="term" value="C:growth cone"/>
    <property type="evidence" value="ECO:0007669"/>
    <property type="project" value="Ensembl"/>
</dbReference>
<dbReference type="GO" id="GO:0016020">
    <property type="term" value="C:membrane"/>
    <property type="evidence" value="ECO:0007005"/>
    <property type="project" value="UniProtKB"/>
</dbReference>
<dbReference type="GO" id="GO:0043025">
    <property type="term" value="C:neuronal cell body"/>
    <property type="evidence" value="ECO:0007669"/>
    <property type="project" value="Ensembl"/>
</dbReference>
<dbReference type="GO" id="GO:0048471">
    <property type="term" value="C:perinuclear region of cytoplasm"/>
    <property type="evidence" value="ECO:0000314"/>
    <property type="project" value="ParkinsonsUK-UCL"/>
</dbReference>
<dbReference type="GO" id="GO:0032991">
    <property type="term" value="C:protein-containing complex"/>
    <property type="evidence" value="ECO:0000314"/>
    <property type="project" value="MGI"/>
</dbReference>
<dbReference type="GO" id="GO:0000151">
    <property type="term" value="C:ubiquitin ligase complex"/>
    <property type="evidence" value="ECO:0000318"/>
    <property type="project" value="GO_Central"/>
</dbReference>
<dbReference type="GO" id="GO:1904288">
    <property type="term" value="F:BAT3 complex binding"/>
    <property type="evidence" value="ECO:0000314"/>
    <property type="project" value="ParkinsonsUK-UCL"/>
</dbReference>
<dbReference type="GO" id="GO:0042802">
    <property type="term" value="F:identical protein binding"/>
    <property type="evidence" value="ECO:0000353"/>
    <property type="project" value="IntAct"/>
</dbReference>
<dbReference type="GO" id="GO:0051087">
    <property type="term" value="F:protein-folding chaperone binding"/>
    <property type="evidence" value="ECO:0000353"/>
    <property type="project" value="ParkinsonsUK-UCL"/>
</dbReference>
<dbReference type="GO" id="GO:0030674">
    <property type="term" value="F:protein-macromolecule adaptor activity"/>
    <property type="evidence" value="ECO:0000315"/>
    <property type="project" value="ParkinsonsUK-UCL"/>
</dbReference>
<dbReference type="GO" id="GO:0038023">
    <property type="term" value="F:signaling receptor activity"/>
    <property type="evidence" value="ECO:0000353"/>
    <property type="project" value="UniProtKB"/>
</dbReference>
<dbReference type="GO" id="GO:0043130">
    <property type="term" value="F:ubiquitin binding"/>
    <property type="evidence" value="ECO:0007669"/>
    <property type="project" value="InterPro"/>
</dbReference>
<dbReference type="GO" id="GO:0061630">
    <property type="term" value="F:ubiquitin protein ligase activity"/>
    <property type="evidence" value="ECO:0000314"/>
    <property type="project" value="MGI"/>
</dbReference>
<dbReference type="GO" id="GO:0004842">
    <property type="term" value="F:ubiquitin-protein transferase activity"/>
    <property type="evidence" value="ECO:0000314"/>
    <property type="project" value="UniProtKB"/>
</dbReference>
<dbReference type="GO" id="GO:1990381">
    <property type="term" value="F:ubiquitin-specific protease binding"/>
    <property type="evidence" value="ECO:0000353"/>
    <property type="project" value="ParkinsonsUK-UCL"/>
</dbReference>
<dbReference type="GO" id="GO:0034450">
    <property type="term" value="F:ubiquitin-ubiquitin ligase activity"/>
    <property type="evidence" value="ECO:0000314"/>
    <property type="project" value="ParkinsonsUK-UCL"/>
</dbReference>
<dbReference type="GO" id="GO:0008270">
    <property type="term" value="F:zinc ion binding"/>
    <property type="evidence" value="ECO:0007669"/>
    <property type="project" value="UniProtKB-KW"/>
</dbReference>
<dbReference type="GO" id="GO:1904380">
    <property type="term" value="P:endoplasmic reticulum mannose trimming"/>
    <property type="evidence" value="ECO:0000304"/>
    <property type="project" value="Reactome"/>
</dbReference>
<dbReference type="GO" id="GO:0030968">
    <property type="term" value="P:endoplasmic reticulum unfolded protein response"/>
    <property type="evidence" value="ECO:0000315"/>
    <property type="project" value="UniProtKB"/>
</dbReference>
<dbReference type="GO" id="GO:0036503">
    <property type="term" value="P:ERAD pathway"/>
    <property type="evidence" value="ECO:0000314"/>
    <property type="project" value="UniProtKB"/>
</dbReference>
<dbReference type="GO" id="GO:0007611">
    <property type="term" value="P:learning or memory"/>
    <property type="evidence" value="ECO:0007669"/>
    <property type="project" value="Ensembl"/>
</dbReference>
<dbReference type="GO" id="GO:0090090">
    <property type="term" value="P:negative regulation of canonical Wnt signaling pathway"/>
    <property type="evidence" value="ECO:0000315"/>
    <property type="project" value="UniProtKB"/>
</dbReference>
<dbReference type="GO" id="GO:0038061">
    <property type="term" value="P:non-canonical NF-kappaB signal transduction"/>
    <property type="evidence" value="ECO:0000314"/>
    <property type="project" value="UniProt"/>
</dbReference>
<dbReference type="GO" id="GO:0051865">
    <property type="term" value="P:protein autoubiquitination"/>
    <property type="evidence" value="ECO:0000314"/>
    <property type="project" value="ParkinsonsUK-UCL"/>
</dbReference>
<dbReference type="GO" id="GO:0044314">
    <property type="term" value="P:protein K27-linked ubiquitination"/>
    <property type="evidence" value="ECO:0000314"/>
    <property type="project" value="UniProt"/>
</dbReference>
<dbReference type="GO" id="GO:0070936">
    <property type="term" value="P:protein K48-linked ubiquitination"/>
    <property type="evidence" value="ECO:0000314"/>
    <property type="project" value="ParkinsonsUK-UCL"/>
</dbReference>
<dbReference type="GO" id="GO:0000209">
    <property type="term" value="P:protein polyubiquitination"/>
    <property type="evidence" value="ECO:0000314"/>
    <property type="project" value="UniProtKB"/>
</dbReference>
<dbReference type="GO" id="GO:2000638">
    <property type="term" value="P:regulation of SREBP signaling pathway"/>
    <property type="evidence" value="ECO:0000250"/>
    <property type="project" value="UniProtKB"/>
</dbReference>
<dbReference type="GO" id="GO:0007165">
    <property type="term" value="P:signal transduction"/>
    <property type="evidence" value="ECO:0000304"/>
    <property type="project" value="ProtInc"/>
</dbReference>
<dbReference type="GO" id="GO:0006511">
    <property type="term" value="P:ubiquitin-dependent protein catabolic process"/>
    <property type="evidence" value="ECO:0000315"/>
    <property type="project" value="UniProtKB"/>
</dbReference>
<dbReference type="GO" id="GO:0016055">
    <property type="term" value="P:Wnt signaling pathway"/>
    <property type="evidence" value="ECO:0007669"/>
    <property type="project" value="UniProtKB-KW"/>
</dbReference>
<dbReference type="CDD" id="cd14421">
    <property type="entry name" value="CUE_AMFR"/>
    <property type="match status" value="1"/>
</dbReference>
<dbReference type="CDD" id="cd16455">
    <property type="entry name" value="RING-H2_AMFR"/>
    <property type="match status" value="1"/>
</dbReference>
<dbReference type="FunFam" id="1.10.8.10:FF:000026">
    <property type="entry name" value="E3 ubiquitin-protein ligase AMFR"/>
    <property type="match status" value="1"/>
</dbReference>
<dbReference type="FunFam" id="3.30.40.10:FF:000149">
    <property type="entry name" value="E3 ubiquitin-protein ligase AMFR"/>
    <property type="match status" value="1"/>
</dbReference>
<dbReference type="Gene3D" id="1.10.8.10">
    <property type="entry name" value="DNA helicase RuvA subunit, C-terminal domain"/>
    <property type="match status" value="1"/>
</dbReference>
<dbReference type="Gene3D" id="3.30.40.10">
    <property type="entry name" value="Zinc/RING finger domain, C3HC4 (zinc finger)"/>
    <property type="match status" value="1"/>
</dbReference>
<dbReference type="IDEAL" id="IID00226"/>
<dbReference type="InterPro" id="IPR040675">
    <property type="entry name" value="AMFR_Ube2g2-bd"/>
</dbReference>
<dbReference type="InterPro" id="IPR003892">
    <property type="entry name" value="CUE"/>
</dbReference>
<dbReference type="InterPro" id="IPR001841">
    <property type="entry name" value="Znf_RING"/>
</dbReference>
<dbReference type="InterPro" id="IPR013083">
    <property type="entry name" value="Znf_RING/FYVE/PHD"/>
</dbReference>
<dbReference type="PANTHER" id="PTHR15067:SF5">
    <property type="entry name" value="E3 UBIQUITIN-PROTEIN LIGASE AMFR"/>
    <property type="match status" value="1"/>
</dbReference>
<dbReference type="PANTHER" id="PTHR15067">
    <property type="entry name" value="E3 UBIQUITIN-PROTEIN LIGASE RNF8"/>
    <property type="match status" value="1"/>
</dbReference>
<dbReference type="Pfam" id="PF02845">
    <property type="entry name" value="CUE"/>
    <property type="match status" value="1"/>
</dbReference>
<dbReference type="Pfam" id="PF18442">
    <property type="entry name" value="G2BR"/>
    <property type="match status" value="1"/>
</dbReference>
<dbReference type="Pfam" id="PF13639">
    <property type="entry name" value="zf-RING_2"/>
    <property type="match status" value="1"/>
</dbReference>
<dbReference type="SMART" id="SM00546">
    <property type="entry name" value="CUE"/>
    <property type="match status" value="1"/>
</dbReference>
<dbReference type="SMART" id="SM00184">
    <property type="entry name" value="RING"/>
    <property type="match status" value="1"/>
</dbReference>
<dbReference type="SUPFAM" id="SSF57850">
    <property type="entry name" value="RING/U-box"/>
    <property type="match status" value="1"/>
</dbReference>
<dbReference type="PROSITE" id="PS51140">
    <property type="entry name" value="CUE"/>
    <property type="match status" value="1"/>
</dbReference>
<dbReference type="PROSITE" id="PS50089">
    <property type="entry name" value="ZF_RING_2"/>
    <property type="match status" value="1"/>
</dbReference>
<feature type="chain" id="PRO_0000064579" description="E3 ubiquitin-protein ligase AMFR">
    <location>
        <begin position="1"/>
        <end position="643"/>
    </location>
</feature>
<feature type="transmembrane region" description="Helical" evidence="2">
    <location>
        <begin position="82"/>
        <end position="102"/>
    </location>
</feature>
<feature type="transmembrane region" description="Helical" evidence="2">
    <location>
        <begin position="122"/>
        <end position="142"/>
    </location>
</feature>
<feature type="transmembrane region" description="Helical" evidence="2">
    <location>
        <begin position="145"/>
        <end position="165"/>
    </location>
</feature>
<feature type="transmembrane region" description="Helical" evidence="2">
    <location>
        <begin position="186"/>
        <end position="206"/>
    </location>
</feature>
<feature type="transmembrane region" description="Helical" evidence="2">
    <location>
        <begin position="215"/>
        <end position="235"/>
    </location>
</feature>
<feature type="transmembrane region" description="Helical" evidence="2">
    <location>
        <begin position="276"/>
        <end position="296"/>
    </location>
</feature>
<feature type="transmembrane region" description="Helical" evidence="2">
    <location>
        <begin position="429"/>
        <end position="449"/>
    </location>
</feature>
<feature type="domain" description="CUE" evidence="4">
    <location>
        <begin position="456"/>
        <end position="498"/>
    </location>
</feature>
<feature type="zinc finger region" description="RING-type" evidence="3">
    <location>
        <begin position="341"/>
        <end position="379"/>
    </location>
</feature>
<feature type="region of interest" description="Disordered" evidence="5">
    <location>
        <begin position="39"/>
        <end position="67"/>
    </location>
</feature>
<feature type="region of interest" description="Disordered" evidence="5">
    <location>
        <begin position="504"/>
        <end position="579"/>
    </location>
</feature>
<feature type="region of interest" description="Disordered" evidence="5">
    <location>
        <begin position="596"/>
        <end position="624"/>
    </location>
</feature>
<feature type="region of interest" description="VCP/p97-interacting motif (VIM)" evidence="15">
    <location>
        <begin position="622"/>
        <end position="640"/>
    </location>
</feature>
<feature type="compositionally biased region" description="Acidic residues" evidence="5">
    <location>
        <begin position="548"/>
        <end position="563"/>
    </location>
</feature>
<feature type="compositionally biased region" description="Basic and acidic residues" evidence="5">
    <location>
        <begin position="564"/>
        <end position="579"/>
    </location>
</feature>
<feature type="modified residue" description="Phosphoserine" evidence="32">
    <location>
        <position position="516"/>
    </location>
</feature>
<feature type="modified residue" description="Phosphoserine" evidence="34">
    <location>
        <position position="523"/>
    </location>
</feature>
<feature type="modified residue" description="Phosphoserine" evidence="33">
    <location>
        <position position="542"/>
    </location>
</feature>
<feature type="sequence variant" id="VAR_088630" description="In SPG89; pathogenic." evidence="25">
    <location>
        <begin position="85"/>
        <end position="643"/>
    </location>
</feature>
<feature type="sequence variant" id="VAR_088631" description="In SPG89; pathogenic." evidence="25">
    <location>
        <begin position="123"/>
        <end position="643"/>
    </location>
</feature>
<feature type="sequence variant" id="VAR_088632" description="In SPG89; likely pathogenic." evidence="25">
    <location>
        <begin position="356"/>
        <end position="643"/>
    </location>
</feature>
<feature type="sequence variant" id="VAR_088633" description="In SPG89; likely pathogenic." evidence="25">
    <location>
        <begin position="364"/>
        <end position="643"/>
    </location>
</feature>
<feature type="sequence variant" id="VAR_035790" description="In a breast cancer sample; somatic mutation; dbSNP:rs373191257." evidence="11">
    <original>D</original>
    <variation>V</variation>
    <location>
        <position position="605"/>
    </location>
</feature>
<feature type="mutagenesis site" description="Decreased palmitoylation." evidence="17">
    <original>CAIC</original>
    <variation>AAIA</variation>
    <location>
        <begin position="341"/>
        <end position="344"/>
    </location>
</feature>
<feature type="mutagenesis site" description="Abolished binding to TAB3." evidence="24">
    <original>D</original>
    <variation>A</variation>
    <location>
        <position position="346"/>
    </location>
</feature>
<feature type="mutagenesis site" description="Decreased palmitoylation. No degradation of HMGCR." evidence="9 17">
    <original>C</original>
    <variation>A</variation>
    <location>
        <position position="356"/>
    </location>
</feature>
<feature type="mutagenesis site" description="Decreased palmitoylation." evidence="17">
    <original>C</original>
    <variation>A</variation>
    <location>
        <position position="364"/>
    </location>
</feature>
<feature type="mutagenesis site" description="Decreased palmitoylation." evidence="17">
    <original>CPTC</original>
    <variation>APTA</variation>
    <location>
        <begin position="375"/>
        <end position="378"/>
    </location>
</feature>
<feature type="mutagenesis site" description="Abolished binding to TAB3." evidence="24">
    <original>R</original>
    <variation>A</variation>
    <location>
        <position position="379"/>
    </location>
</feature>
<feature type="sequence conflict" description="In Ref. 3; AAA79362." evidence="28" ref="3">
    <original>V</original>
    <variation>D</variation>
    <location>
        <position position="406"/>
    </location>
</feature>
<feature type="sequence conflict" description="In Ref. 3; AAA79362." evidence="28" ref="3">
    <original>D</original>
    <variation>V</variation>
    <location>
        <position position="491"/>
    </location>
</feature>
<feature type="sequence conflict" description="In Ref. 3; AAA79362." evidence="28" ref="3">
    <original>V</original>
    <variation>L</variation>
    <location>
        <position position="500"/>
    </location>
</feature>
<feature type="sequence conflict" description="In Ref. 1; AAD56722." evidence="28" ref="1">
    <original>S</original>
    <variation>L</variation>
    <location>
        <position position="614"/>
    </location>
</feature>
<feature type="helix" evidence="35">
    <location>
        <begin position="332"/>
        <end position="337"/>
    </location>
</feature>
<feature type="strand" evidence="39">
    <location>
        <begin position="342"/>
        <end position="344"/>
    </location>
</feature>
<feature type="strand" evidence="39">
    <location>
        <begin position="351"/>
        <end position="353"/>
    </location>
</feature>
<feature type="strand" evidence="35">
    <location>
        <begin position="355"/>
        <end position="357"/>
    </location>
</feature>
<feature type="strand" evidence="39">
    <location>
        <begin position="359"/>
        <end position="361"/>
    </location>
</feature>
<feature type="helix" evidence="39">
    <location>
        <begin position="362"/>
        <end position="369"/>
    </location>
</feature>
<feature type="strand" evidence="39">
    <location>
        <begin position="376"/>
        <end position="378"/>
    </location>
</feature>
<feature type="helix" evidence="38">
    <location>
        <begin position="456"/>
        <end position="467"/>
    </location>
</feature>
<feature type="helix" evidence="38">
    <location>
        <begin position="473"/>
        <end position="483"/>
    </location>
</feature>
<feature type="helix" evidence="38">
    <location>
        <begin position="486"/>
        <end position="494"/>
    </location>
</feature>
<feature type="helix" evidence="36">
    <location>
        <begin position="575"/>
        <end position="599"/>
    </location>
</feature>
<feature type="helix" evidence="37">
    <location>
        <begin position="625"/>
        <end position="637"/>
    </location>
</feature>
<evidence type="ECO:0000250" key="1">
    <source>
        <dbReference type="UniProtKB" id="Q9R049"/>
    </source>
</evidence>
<evidence type="ECO:0000255" key="2"/>
<evidence type="ECO:0000255" key="3">
    <source>
        <dbReference type="PROSITE-ProRule" id="PRU00175"/>
    </source>
</evidence>
<evidence type="ECO:0000255" key="4">
    <source>
        <dbReference type="PROSITE-ProRule" id="PRU00468"/>
    </source>
</evidence>
<evidence type="ECO:0000256" key="5">
    <source>
        <dbReference type="SAM" id="MobiDB-lite"/>
    </source>
</evidence>
<evidence type="ECO:0000269" key="6">
    <source>
    </source>
</evidence>
<evidence type="ECO:0000269" key="7">
    <source>
    </source>
</evidence>
<evidence type="ECO:0000269" key="8">
    <source>
    </source>
</evidence>
<evidence type="ECO:0000269" key="9">
    <source>
    </source>
</evidence>
<evidence type="ECO:0000269" key="10">
    <source>
    </source>
</evidence>
<evidence type="ECO:0000269" key="11">
    <source>
    </source>
</evidence>
<evidence type="ECO:0000269" key="12">
    <source>
    </source>
</evidence>
<evidence type="ECO:0000269" key="13">
    <source>
    </source>
</evidence>
<evidence type="ECO:0000269" key="14">
    <source>
    </source>
</evidence>
<evidence type="ECO:0000269" key="15">
    <source>
    </source>
</evidence>
<evidence type="ECO:0000269" key="16">
    <source>
    </source>
</evidence>
<evidence type="ECO:0000269" key="17">
    <source>
    </source>
</evidence>
<evidence type="ECO:0000269" key="18">
    <source>
    </source>
</evidence>
<evidence type="ECO:0000269" key="19">
    <source>
    </source>
</evidence>
<evidence type="ECO:0000269" key="20">
    <source>
    </source>
</evidence>
<evidence type="ECO:0000269" key="21">
    <source>
    </source>
</evidence>
<evidence type="ECO:0000269" key="22">
    <source>
    </source>
</evidence>
<evidence type="ECO:0000269" key="23">
    <source>
    </source>
</evidence>
<evidence type="ECO:0000269" key="24">
    <source>
    </source>
</evidence>
<evidence type="ECO:0000269" key="25">
    <source>
    </source>
</evidence>
<evidence type="ECO:0000303" key="26">
    <source>
    </source>
</evidence>
<evidence type="ECO:0000303" key="27">
    <source>
    </source>
</evidence>
<evidence type="ECO:0000305" key="28"/>
<evidence type="ECO:0000305" key="29">
    <source>
    </source>
</evidence>
<evidence type="ECO:0000312" key="30">
    <source>
        <dbReference type="EMBL" id="AAD56722.1"/>
    </source>
</evidence>
<evidence type="ECO:0000312" key="31">
    <source>
        <dbReference type="HGNC" id="HGNC:463"/>
    </source>
</evidence>
<evidence type="ECO:0007744" key="32">
    <source>
    </source>
</evidence>
<evidence type="ECO:0007744" key="33">
    <source>
    </source>
</evidence>
<evidence type="ECO:0007744" key="34">
    <source>
    </source>
</evidence>
<evidence type="ECO:0007829" key="35">
    <source>
        <dbReference type="PDB" id="2LXH"/>
    </source>
</evidence>
<evidence type="ECO:0007829" key="36">
    <source>
        <dbReference type="PDB" id="3H8K"/>
    </source>
</evidence>
<evidence type="ECO:0007829" key="37">
    <source>
        <dbReference type="PDB" id="3TIW"/>
    </source>
</evidence>
<evidence type="ECO:0007829" key="38">
    <source>
        <dbReference type="PDB" id="4G3O"/>
    </source>
</evidence>
<evidence type="ECO:0007829" key="39">
    <source>
        <dbReference type="PDB" id="4LAD"/>
    </source>
</evidence>
<organism evidence="30">
    <name type="scientific">Homo sapiens</name>
    <name type="common">Human</name>
    <dbReference type="NCBI Taxonomy" id="9606"/>
    <lineage>
        <taxon>Eukaryota</taxon>
        <taxon>Metazoa</taxon>
        <taxon>Chordata</taxon>
        <taxon>Craniata</taxon>
        <taxon>Vertebrata</taxon>
        <taxon>Euteleostomi</taxon>
        <taxon>Mammalia</taxon>
        <taxon>Eutheria</taxon>
        <taxon>Euarchontoglires</taxon>
        <taxon>Primates</taxon>
        <taxon>Haplorrhini</taxon>
        <taxon>Catarrhini</taxon>
        <taxon>Hominidae</taxon>
        <taxon>Homo</taxon>
    </lineage>
</organism>
<name>AMFR_HUMAN</name>
<reference key="1">
    <citation type="journal article" date="1999" name="FEBS Lett.">
        <title>The autocrine motility factor receptor gene encodes a novel type of seven transmembrane protein.</title>
        <authorList>
            <person name="Shimizu K."/>
            <person name="Tani M."/>
            <person name="Watanabe H."/>
            <person name="Nagamachi Y."/>
            <person name="Niinaka Y."/>
            <person name="Shiroishi T."/>
            <person name="Ohwada S."/>
            <person name="Raz A."/>
            <person name="Yokota J."/>
        </authorList>
    </citation>
    <scope>NUCLEOTIDE SEQUENCE [MRNA]</scope>
    <scope>FUNCTION</scope>
</reference>
<reference key="2">
    <citation type="journal article" date="2004" name="Genome Res.">
        <title>The status, quality, and expansion of the NIH full-length cDNA project: the Mammalian Gene Collection (MGC).</title>
        <authorList>
            <consortium name="The MGC Project Team"/>
        </authorList>
    </citation>
    <scope>NUCLEOTIDE SEQUENCE [LARGE SCALE MRNA]</scope>
    <source>
        <tissue>Ovary</tissue>
    </source>
</reference>
<reference key="3">
    <citation type="journal article" date="1995" name="Biochem. Biophys. Res. Commun.">
        <title>Identification of an upstream region that controls the transcription of the human autocrine motility factor receptor.</title>
        <authorList>
            <person name="Huang B."/>
            <person name="Xie Y."/>
            <person name="Raz A."/>
        </authorList>
    </citation>
    <scope>NUCLEOTIDE SEQUENCE [MRNA] OF 358-643</scope>
    <source>
        <tissue>Placenta</tissue>
    </source>
</reference>
<reference key="4">
    <citation type="journal article" date="1991" name="J. Biol. Chem.">
        <title>Purification of human tumor cell autocrine motility factor and molecular cloning of its receptor.</title>
        <authorList>
            <person name="Watanabe H."/>
            <person name="Carmi P."/>
            <person name="Hogan V."/>
            <person name="Raz T."/>
            <person name="Silletti S."/>
            <person name="Nabi I.R."/>
            <person name="Raz A."/>
        </authorList>
    </citation>
    <scope>NUCLEOTIDE SEQUENCE [MRNA] OF 520-643</scope>
</reference>
<reference key="5">
    <citation type="journal article" date="2001" name="Proc. Natl. Acad. Sci. U.S.A.">
        <title>The tumor autocrine motility factor receptor, gp78, is a ubiquitin protein ligase implicated in degradation from the endoplasmic reticulum.</title>
        <authorList>
            <person name="Fang S."/>
            <person name="Ferrone M."/>
            <person name="Yang C."/>
            <person name="Jensen J.P."/>
            <person name="Tiwari S."/>
            <person name="Weissman A.M."/>
        </authorList>
    </citation>
    <scope>FUNCTION AS A UBIQUITIN LIGASE</scope>
    <scope>SUBCELLULAR LOCATION</scope>
    <scope>INTERACTION WITH UBE2G2</scope>
</reference>
<reference key="6">
    <citation type="journal article" date="2003" name="J. Biol. Chem.">
        <title>Overexpression of the tumor autocrine motility factor receptor, gp78, a ubiquitin protein ligase (E3), results in increased ubiquitinylation and decreased secretion of apolipoprotein B100 in Hep G2 cells.</title>
        <authorList>
            <person name="Liang J.S."/>
            <person name="Kim T."/>
            <person name="Fang S."/>
            <person name="Yamaguchi J."/>
            <person name="Weissman A.M."/>
            <person name="Fisher E.A."/>
            <person name="Ginsberg H.N."/>
        </authorList>
    </citation>
    <scope>FUNCTION IN UBIQUITINATION OF APOB</scope>
</reference>
<reference key="7">
    <citation type="journal article" date="2005" name="Mol. Cell">
        <title>Gp78, a membrane-anchored ubiquitin ligase, associates with Insig-1 and couples sterol-regulated ubiquitination to degradation of HMG CoA reductase.</title>
        <authorList>
            <person name="Song B.L."/>
            <person name="Sever N."/>
            <person name="DeBose-Boyd R.A."/>
        </authorList>
    </citation>
    <scope>INTERACTION WITH INSIG1 AND VCP</scope>
    <scope>FUNCTION</scope>
    <scope>MUTAGENESIS OF CYS-356</scope>
</reference>
<reference key="8">
    <citation type="journal article" date="2005" name="Proc. Natl. Acad. Sci. U.S.A.">
        <title>Recruitment of the p97 ATPase and ubiquitin ligases to the site of retrotranslocation at the endoplasmic reticulum membrane.</title>
        <authorList>
            <person name="Ye Y."/>
            <person name="Shibata Y."/>
            <person name="Kikkert M."/>
            <person name="van Voorden S."/>
            <person name="Wiertz E."/>
            <person name="Rapoport T.A."/>
        </authorList>
    </citation>
    <scope>INTERACTION WITH DERL1 AND VCP</scope>
</reference>
<reference key="9">
    <citation type="journal article" date="2006" name="J. Biol. Chem.">
        <title>Sterol-regulated degradation of Insig-1 mediated by the membrane-bound ubiquitin ligase gp78.</title>
        <authorList>
            <person name="Lee J.N."/>
            <person name="Song B."/>
            <person name="DeBose-Boyd R.A."/>
            <person name="Ye J."/>
        </authorList>
    </citation>
    <scope>FUNCTION</scope>
</reference>
<reference key="10">
    <citation type="journal article" date="2008" name="Proc. Natl. Acad. Sci. U.S.A.">
        <title>A quantitative atlas of mitotic phosphorylation.</title>
        <authorList>
            <person name="Dephoure N."/>
            <person name="Zhou C."/>
            <person name="Villen J."/>
            <person name="Beausoleil S.A."/>
            <person name="Bakalarski C.E."/>
            <person name="Elledge S.J."/>
            <person name="Gygi S.P."/>
        </authorList>
    </citation>
    <scope>PHOSPHORYLATION [LARGE SCALE ANALYSIS] AT SER-516</scope>
    <scope>IDENTIFICATION BY MASS SPECTROMETRY [LARGE SCALE ANALYSIS]</scope>
    <source>
        <tissue>Cervix carcinoma</tissue>
    </source>
</reference>
<reference key="11">
    <citation type="journal article" date="2009" name="Arch. Biochem. Biophys.">
        <title>CYP3A4 ubiquitination by gp78 (the tumor autocrine motility factor receptor, AMFR) and CHIP E3 ligases.</title>
        <authorList>
            <person name="Pabarcus M.K."/>
            <person name="Hoe N."/>
            <person name="Sadeghi S."/>
            <person name="Patterson C."/>
            <person name="Wiertz E."/>
            <person name="Correia M.A."/>
        </authorList>
    </citation>
    <scope>FUNCTION</scope>
</reference>
<reference key="12">
    <citation type="journal article" date="2011" name="Mol. Cell">
        <title>A ubiquitin ligase-associated chaperone holdase maintains polypeptides in soluble states for proteasome degradation.</title>
        <authorList>
            <person name="Wang Q."/>
            <person name="Liu Y."/>
            <person name="Soetandyo N."/>
            <person name="Baek K."/>
            <person name="Hegde R."/>
            <person name="Ye Y."/>
        </authorList>
    </citation>
    <scope>FUNCTION</scope>
    <scope>INTERACTION WITH BAG6</scope>
</reference>
<reference key="13">
    <citation type="journal article" date="2011" name="Proc. Natl. Acad. Sci. U.S.A.">
        <title>Sterol-induced degradation of HMG CoA reductase depends on interplay of two Insigs and two ubiquitin ligases, gp78 and Trc8.</title>
        <authorList>
            <person name="Jo Y."/>
            <person name="Lee P.C."/>
            <person name="Sguigna P.V."/>
            <person name="DeBose-Boyd R.A."/>
        </authorList>
    </citation>
    <scope>FUNCTION</scope>
    <scope>INTERACTION WITH INSIG1</scope>
</reference>
<reference key="14">
    <citation type="journal article" date="2012" name="FEBS Lett.">
        <title>RING finger palmitoylation of the endoplasmic reticulum Gp78 E3 ubiquitin ligase.</title>
        <authorList>
            <person name="Fairbank M."/>
            <person name="Huang K."/>
            <person name="El-Husseini A."/>
            <person name="Nabi I.R."/>
        </authorList>
    </citation>
    <scope>SUBCELLULAR LOCATION</scope>
    <scope>PALMITOYLATION</scope>
    <scope>MUTAGENESIS OF 341-CYS--CYS-344; CYS-356; CYS-364 AND 375-CYS--CYS-378</scope>
</reference>
<reference key="15">
    <citation type="journal article" date="2013" name="J. Proteome Res.">
        <title>Toward a comprehensive characterization of a human cancer cell phosphoproteome.</title>
        <authorList>
            <person name="Zhou H."/>
            <person name="Di Palma S."/>
            <person name="Preisinger C."/>
            <person name="Peng M."/>
            <person name="Polat A.N."/>
            <person name="Heck A.J."/>
            <person name="Mohammed S."/>
        </authorList>
    </citation>
    <scope>PHOSPHORYLATION [LARGE SCALE ANALYSIS] AT SER-542</scope>
    <scope>IDENTIFICATION BY MASS SPECTROMETRY [LARGE SCALE ANALYSIS]</scope>
    <source>
        <tissue>Cervix carcinoma</tissue>
        <tissue>Erythroleukemia</tissue>
    </source>
</reference>
<reference key="16">
    <citation type="journal article" date="2013" name="Mol. Biol. Cell">
        <title>Ancient ubiquitous protein-1 mediates sterol-induced ubiquitination of 3-hydroxy-3-methylglutaryl CoA reductase in lipid droplet-associated endoplasmic reticulum membranes.</title>
        <authorList>
            <person name="Jo Y."/>
            <person name="Hartman I.Z."/>
            <person name="DeBose-Boyd R.A."/>
        </authorList>
    </citation>
    <scope>FUNCTION</scope>
    <scope>INTERACTION WITH AUP1; RNF139 AND UBE2G2</scope>
</reference>
<reference key="17">
    <citation type="journal article" date="2014" name="Elife">
        <title>USP13 antagonizes gp78 to maintain functionality of a chaperone in ER-associated degradation.</title>
        <authorList>
            <person name="Liu Y."/>
            <person name="Soetandyo N."/>
            <person name="Lee J.G."/>
            <person name="Liu L."/>
            <person name="Xu Y."/>
            <person name="Clemons W.M. Jr."/>
            <person name="Ye Y."/>
        </authorList>
    </citation>
    <scope>FUNCTION</scope>
    <scope>INTERACTION WITH USP13</scope>
</reference>
<reference key="18">
    <citation type="journal article" date="2014" name="J. Proteomics">
        <title>An enzyme assisted RP-RPLC approach for in-depth analysis of human liver phosphoproteome.</title>
        <authorList>
            <person name="Bian Y."/>
            <person name="Song C."/>
            <person name="Cheng K."/>
            <person name="Dong M."/>
            <person name="Wang F."/>
            <person name="Huang J."/>
            <person name="Sun D."/>
            <person name="Wang L."/>
            <person name="Ye M."/>
            <person name="Zou H."/>
        </authorList>
    </citation>
    <scope>PHOSPHORYLATION [LARGE SCALE ANALYSIS] AT SER-523</scope>
    <scope>IDENTIFICATION BY MASS SPECTROMETRY [LARGE SCALE ANALYSIS]</scope>
    <source>
        <tissue>Liver</tissue>
    </source>
</reference>
<reference key="19">
    <citation type="journal article" date="2018" name="Dev. Cell">
        <title>A Proximity Labeling Strategy Provides Insights into the Composition and Dynamics of Lipid Droplet Proteomes.</title>
        <authorList>
            <person name="Bersuker K."/>
            <person name="Peterson C.W.H."/>
            <person name="To M."/>
            <person name="Sahl S.J."/>
            <person name="Savikhin V."/>
            <person name="Grossman E.A."/>
            <person name="Nomura D.K."/>
            <person name="Olzmann J.A."/>
        </authorList>
    </citation>
    <scope>INTERACTION WITH C18ORF32</scope>
</reference>
<reference key="20">
    <citation type="journal article" date="2017" name="Nat. Cell Biol.">
        <title>Cholesterol and fatty acids regulate cysteine ubiquitylation of ACAT2 through competitive oxidation.</title>
        <authorList>
            <person name="Wang Y.J."/>
            <person name="Bian Y."/>
            <person name="Luo J."/>
            <person name="Lu M."/>
            <person name="Xiong Y."/>
            <person name="Guo S.Y."/>
            <person name="Yin H.Y."/>
            <person name="Lin X."/>
            <person name="Li Q."/>
            <person name="Chang C.C.Y."/>
            <person name="Chang T.Y."/>
            <person name="Li B.L."/>
            <person name="Song B.L."/>
        </authorList>
    </citation>
    <scope>FUNCTION</scope>
    <scope>CATALYTIC ACTIVITY</scope>
</reference>
<reference key="21">
    <citation type="journal article" date="2017" name="Nat. Cell Biol.">
        <title>Corrigendum: Cholesterol and fatty acids regulate cysteine ubiquitylation of ACAT2 through competitive oxidation.</title>
        <authorList>
            <person name="Wang Y.J."/>
            <person name="Bian Y."/>
            <person name="Luo J."/>
            <person name="Lu M."/>
            <person name="Xiong Y."/>
            <person name="Guo S.Y."/>
            <person name="Yong H."/>
            <person name="Lin X."/>
            <person name="Li Q."/>
            <person name="Chang C.C.Y."/>
            <person name="Chang T.Y."/>
            <person name="Li B.L."/>
            <person name="Song B.L."/>
        </authorList>
    </citation>
    <scope>ERRATUM OF PUBMED:28604676</scope>
</reference>
<reference key="22">
    <citation type="journal article" date="2019" name="Science">
        <title>LMBR1L regulates lymphopoiesis through Wnt/beta-catenin signaling.</title>
        <authorList>
            <person name="Choi J.H."/>
            <person name="Zhong X."/>
            <person name="McAlpine W."/>
            <person name="Liao T.C."/>
            <person name="Zhang D."/>
            <person name="Fang B."/>
            <person name="Russell J."/>
            <person name="Ludwig S."/>
            <person name="Nair-Gill E."/>
            <person name="Zhang Z."/>
            <person name="Wang K.W."/>
            <person name="Misawa T."/>
            <person name="Zhan X."/>
            <person name="Choi M."/>
            <person name="Wang T."/>
            <person name="Li X."/>
            <person name="Tang M."/>
            <person name="Sun Q."/>
            <person name="Yu L."/>
            <person name="Murray A.R."/>
            <person name="Moresco E.M.Y."/>
            <person name="Beutler B."/>
        </authorList>
    </citation>
    <scope>FUNCTION</scope>
    <scope>INTERACTION WITH LMBR1L</scope>
</reference>
<reference key="23">
    <citation type="journal article" date="2020" name="Nat. Commun.">
        <title>Competitive oxidation and ubiquitylation on the evolutionarily conserved cysteine confer tissue-specific stabilization of Insig-2.</title>
        <authorList>
            <person name="Zhou Z.S."/>
            <person name="Li M.X."/>
            <person name="Liu J."/>
            <person name="Jiao H."/>
            <person name="Xia J.M."/>
            <person name="Shi X.J."/>
            <person name="Zhao H."/>
            <person name="Chu L."/>
            <person name="Liu J."/>
            <person name="Qi W."/>
            <person name="Luo J."/>
            <person name="Song B.L."/>
        </authorList>
    </citation>
    <scope>FUNCTION</scope>
    <scope>CATALYTIC ACTIVITY</scope>
</reference>
<reference key="24">
    <citation type="journal article" date="2023" name="Acta Neuropathol.">
        <title>AMFR dysfunction causes autosomal recessive spastic paraplegia in human that is amenable to statin treatment in a preclinical model.</title>
        <authorList>
            <person name="Deng R."/>
            <person name="Medico-Salsench E."/>
            <person name="Nikoncuk A."/>
            <person name="Ramakrishnan R."/>
            <person name="Lanko K."/>
            <person name="Kuehn N.A."/>
            <person name="van der Linde H.C."/>
            <person name="Lor-Zade S."/>
            <person name="Albuainain F."/>
            <person name="Shi Y."/>
            <person name="Yousefi S."/>
            <person name="Capo I."/>
            <person name="van den Herik E.M."/>
            <person name="van Slegtenhorst M."/>
            <person name="van Minkelen R."/>
            <person name="Geeven G."/>
            <person name="Mulder M.T."/>
            <person name="Ruijter G.J.G."/>
            <person name="Luetjohann D."/>
            <person name="Jacobs E.H."/>
            <person name="Houlden H."/>
            <person name="Pagnamenta A.T."/>
            <person name="Metcalfe K."/>
            <person name="Jackson A."/>
            <person name="Banka S."/>
            <person name="De Simone L."/>
            <person name="Schwaede A."/>
            <person name="Kuntz N."/>
            <person name="Palculict T.B."/>
            <person name="Abbas S."/>
            <person name="Umair M."/>
            <person name="AlMuhaizea M."/>
            <person name="Colak D."/>
            <person name="AlQudairy H."/>
            <person name="Alsagob M."/>
            <person name="Pereira C."/>
            <person name="Trunzo R."/>
            <person name="Karageorgou V."/>
            <person name="Bertoli-Avella A.M."/>
            <person name="Bauer P."/>
            <person name="Bouman A."/>
            <person name="Hoefsloot L.H."/>
            <person name="van Ham T.J."/>
            <person name="Issa M."/>
            <person name="Zaki M.S."/>
            <person name="Gleeson J.G."/>
            <person name="Willemsen R."/>
            <person name="Kaya N."/>
            <person name="Arold S.T."/>
            <person name="Maroofian R."/>
            <person name="Sanderson L.E."/>
            <person name="Barakat T.S."/>
        </authorList>
    </citation>
    <scope>INVOLVEMENT IN SPG89</scope>
    <scope>VARIANTS SPG89 85-TRP--SER-643 DEL; 123-TRP--SER-643 DEL; 356-CYS--SER-643 DEL AND 364-CYS--SER-643 DEL</scope>
    <scope>FUNCTION</scope>
    <scope>TISSUE SPECIFICITY</scope>
</reference>
<reference key="25">
    <citation type="journal article" date="2023" name="Nat. Microbiol.">
        <title>Staphylococcal virulence factor HlgB targets the endoplasmic-reticulum-resident E3 ubiquitin ligase AMFR to promote pneumonia.</title>
        <authorList>
            <person name="Sun L."/>
            <person name="Zhang H."/>
            <person name="Zhang H."/>
            <person name="Lou X."/>
            <person name="Wang Z."/>
            <person name="Wu Y."/>
            <person name="Yang X."/>
            <person name="Chen D."/>
            <person name="Guo B."/>
            <person name="Zhang A."/>
            <person name="Qian F."/>
        </authorList>
    </citation>
    <scope>FUNCTION</scope>
    <scope>SUBCELLULAR LOCATION</scope>
    <scope>INTERACTION WITH STAPHYLOCOCCUS AUREUS HLGB (MICROBIAL INFECTION)</scope>
    <scope>MUTAGENESIS OF ASP-346 AND ARG-379</scope>
</reference>
<reference key="26">
    <citation type="submission" date="2007-09" db="PDB data bank">
        <title>Solution structure of RSGI RUH-076, a human CUE domain.</title>
        <authorList>
            <consortium name="RIKEN structural genomics initiative (RSGI)"/>
        </authorList>
    </citation>
    <scope>STRUCTURE BY NMR OF 452-502</scope>
</reference>
<reference key="27">
    <citation type="journal article" date="2011" name="J. Biol. Chem.">
        <title>The structural and functional basis of the p97/valosin-containing protein (VCP)-interacting motif (VIM): mutually exclusive binding of cofactors to the N-terminal domain of p97.</title>
        <authorList>
            <person name="Hanzelmann P."/>
            <person name="Schindelin H."/>
        </authorList>
    </citation>
    <scope>X-RAY CRYSTALLOGRAPHY (1.8 ANGSTROMS) OF 622-640 IN COMPLEX WITH VCP</scope>
    <scope>VIM MOTIF</scope>
</reference>
<reference key="28">
    <citation type="journal article" date="2006" name="Science">
        <title>The consensus coding sequences of human breast and colorectal cancers.</title>
        <authorList>
            <person name="Sjoeblom T."/>
            <person name="Jones S."/>
            <person name="Wood L.D."/>
            <person name="Parsons D.W."/>
            <person name="Lin J."/>
            <person name="Barber T.D."/>
            <person name="Mandelker D."/>
            <person name="Leary R.J."/>
            <person name="Ptak J."/>
            <person name="Silliman N."/>
            <person name="Szabo S."/>
            <person name="Buckhaults P."/>
            <person name="Farrell C."/>
            <person name="Meeh P."/>
            <person name="Markowitz S.D."/>
            <person name="Willis J."/>
            <person name="Dawson D."/>
            <person name="Willson J.K.V."/>
            <person name="Gazdar A.F."/>
            <person name="Hartigan J."/>
            <person name="Wu L."/>
            <person name="Liu C."/>
            <person name="Parmigiani G."/>
            <person name="Park B.H."/>
            <person name="Bachman K.E."/>
            <person name="Papadopoulos N."/>
            <person name="Vogelstein B."/>
            <person name="Kinzler K.W."/>
            <person name="Velculescu V.E."/>
        </authorList>
    </citation>
    <scope>VARIANT [LARGE SCALE ANALYSIS] VAL-605</scope>
</reference>
<proteinExistence type="evidence at protein level"/>
<protein>
    <recommendedName>
        <fullName>E3 ubiquitin-protein ligase AMFR</fullName>
        <ecNumber evidence="20 23">2.3.2.36</ecNumber>
    </recommendedName>
    <alternativeName>
        <fullName evidence="26">Autocrine motility factor receptor</fullName>
        <shortName evidence="26">AMF receptor</shortName>
    </alternativeName>
    <alternativeName>
        <fullName>RING finger protein 45</fullName>
    </alternativeName>
    <alternativeName>
        <fullName evidence="27">gp78</fullName>
    </alternativeName>
</protein>
<gene>
    <name evidence="26 31" type="primary">AMFR</name>
    <name evidence="31" type="synonym">RNF45</name>
</gene>
<comment type="function">
    <text evidence="6 7 8 9 12 13 14 16 18 19 20 22 23 24 25">E3 ubiquitin-protein ligase that mediates the polyubiquitination of lysine and cysteine residues on target proteins, such as CD3D, CYP3A4, CFTR, INSIG1, SOAT2/ACAT2 and APOB for proteasomal degradation (PubMed:10456327, PubMed:11724934, PubMed:12670940, PubMed:19103148, PubMed:24424410, PubMed:28604676). Component of a VCP/p97-AMFR/gp78 complex that participates in the final step of endoplasmic reticulum-associated degradation (ERAD) (PubMed:10456327, PubMed:11724934, PubMed:19103148, PubMed:24424410). The VCP/p97-AMFR/gp78 complex is involved in the sterol-accelerated ERAD degradation of HMGCR through binding to the HMGCR-INSIG1 complex at the ER membrane (PubMed:16168377, PubMed:22143767). In addition, interaction of AMFR with AUP1 facilitates interaction of AMFR with ubiquitin-conjugating enzyme UBE2G2 and ubiquitin ligase RNF139, leading to sterol-induced HMGCR ubiquitination (PubMed:23223569). The ubiquitinated HMGCR is then released from the ER into the cytosol for subsequent destruction (PubMed:16168377, PubMed:22143767, PubMed:23223569). In addition to ubiquitination on lysine residues, catalyzes ubiquitination on cysteine residues: together with INSIG1, mediates polyubiquitination of SOAT2/ACAT2 at 'Cys-277', leading to its degradation when the lipid levels are low (PubMed:28604676). Catalyzes ubiquitination and subsequent degradation of INSIG1 when cells are depleted of sterols (PubMed:17043353). Mediates polyubiquitination of INSIG2 at 'Cys-215' in some tissues, leading to its degradation (PubMed:31953408). Also regulates ERAD through the ubiquitination of UBL4A a component of the BAG6/BAT3 complex (PubMed:21636303). Also acts as a scaffold protein to assemble a complex that couples ubiquitination, retranslocation and deglycosylation (PubMed:21636303). Mediates tumor invasion and metastasis as a receptor for the GPI/autocrine motility factor (PubMed:10456327). In association with LMBR1L and UBAC2, negatively regulates the canonical Wnt signaling pathway in the lymphocytes by promoting the ubiquitin-mediated degradation of CTNNB1 and Wnt receptors FZD6 and LRP6 (PubMed:31073040). Regulates NF-kappa-B and MAPK signaling pathways by mediating 'Lys-27'-linked polyubiquitination of TAB3 and promoting subsequent TAK1/MAP3K7 activation (PubMed:36593296). Required for proper lipid homeostasis (PubMed:37119330).</text>
</comment>
<comment type="catalytic activity">
    <reaction evidence="20 23">
        <text>[E2 ubiquitin-conjugating enzyme]-S-ubiquitinyl-L-cysteine + [acceptor protein]-L-cysteine = [E2 ubiquitin-conjugating enzyme]-L-cysteine + [acceptor protein]-S-ubiquitinyl-L-cysteine.</text>
        <dbReference type="EC" id="2.3.2.36"/>
    </reaction>
</comment>
<comment type="pathway">
    <text evidence="7 9">Protein modification; protein ubiquitination.</text>
</comment>
<comment type="subunit">
    <text evidence="1 7 9 10 14 15 16 18 19 21 29">Interacts with RNF5 (By similarity). Also forms an ERAD complex containing VCP/p97, NGLY1; PSMC1; SAKS1 and RAD23B required for coupling retrotranslocation, ubiquitination and deglycosylation (By similarity). Interacts with DERL1 (PubMed:16186510). Interacts (through a region distinct from the RING finger) with UBE2G2/UBC7 (PubMed:11724934). Component of the VCP/p97-AMFR/gp78 complex that enhances VCP/p97 binding to polyubiquitinated proteins for their degradation by the endoplasmic reticulum-associated degradation (ERAD) pathway (By similarity). Interacts (via the VIM) with VCP/p97 (PubMed:16168377, PubMed:16186510). Interacts (via its membrane domain) with INSIG1; the interaction initiates the sterol-mediated ubiquitination and degradation of HMGCR by the ERAD pathway (PubMed:16168377, PubMed:22143767). Interacts with AUP1, UBE2G2 and RNF139/TRC8; interaction with AUP1 facilitates interaction of AMFR with ubiquitin-conjugating enzyme UBE2G2 and ubiquitin ligase RNF139, leading to sterol-induced ubiquitination of HMGCR and its subsequent proteasomal degradation (PubMed:23223569). Interacts with BAG6 (PubMed:21636303). Interacts with USP13 (via UBA 2 domain); the interaction is direct (PubMed:24424410). Interacts with LMBR1L (PubMed:31073040). Interacts with UBAC2 and CTNNB1 (By similarity). Interacts with C18orf32 (PubMed:29275994).</text>
</comment>
<comment type="subunit">
    <text evidence="24">(Microbial infection) Interacts with Staphylococcus aureus HIgB; this interaction regulates AMFR-mediated inflammation by promoting TAB3 ubiquitination to promote TAB3-TAK1 complex formation.</text>
</comment>
<comment type="interaction">
    <interactant intactId="EBI-1046367">
        <id>Q9UKV5</id>
    </interactant>
    <interactant intactId="EBI-1046367">
        <id>Q9UKV5</id>
        <label>AMFR</label>
    </interactant>
    <organismsDiffer>false</organismsDiffer>
    <experiments>11</experiments>
</comment>
<comment type="interaction">
    <interactant intactId="EBI-1046367">
        <id>Q9UKV5</id>
    </interactant>
    <interactant intactId="EBI-359299">
        <id>O75477</id>
        <label>ERLIN1</label>
    </interactant>
    <organismsDiffer>false</organismsDiffer>
    <experiments>2</experiments>
</comment>
<comment type="interaction">
    <interactant intactId="EBI-1046367">
        <id>Q9UKV5</id>
    </interactant>
    <interactant intactId="EBI-4400770">
        <id>O94905</id>
        <label>ERLIN2</label>
    </interactant>
    <organismsDiffer>false</organismsDiffer>
    <experiments>10</experiments>
</comment>
<comment type="interaction">
    <interactant intactId="EBI-1046367">
        <id>Q9UKV5</id>
    </interactant>
    <interactant intactId="EBI-6252425">
        <id>O15503</id>
        <label>INSIG1</label>
    </interactant>
    <organismsDiffer>false</organismsDiffer>
    <experiments>2</experiments>
</comment>
<comment type="interaction">
    <interactant intactId="EBI-1046367">
        <id>Q9UKV5</id>
    </interactant>
    <interactant intactId="EBI-11425701">
        <id>Q9BVT8</id>
        <label>TMUB1</label>
    </interactant>
    <organismsDiffer>false</organismsDiffer>
    <experiments>2</experiments>
</comment>
<comment type="interaction">
    <interactant intactId="EBI-1046367">
        <id>Q9UKV5</id>
    </interactant>
    <interactant intactId="EBI-1051028">
        <id>P60604</id>
        <label>UBE2G2</label>
    </interactant>
    <organismsDiffer>false</organismsDiffer>
    <experiments>21</experiments>
</comment>
<comment type="interaction">
    <interactant intactId="EBI-1046367">
        <id>Q9UKV5</id>
    </interactant>
    <interactant intactId="EBI-355164">
        <id>P55072</id>
        <label>VCP</label>
    </interactant>
    <organismsDiffer>false</organismsDiffer>
    <experiments>12</experiments>
</comment>
<comment type="interaction">
    <interactant intactId="EBI-1046367">
        <id>Q9UKV5</id>
    </interactant>
    <interactant intactId="EBI-9108745">
        <id>P60605</id>
        <label>Ube2g2</label>
    </interactant>
    <organismsDiffer>true</organismsDiffer>
    <experiments>10</experiments>
</comment>
<comment type="subcellular location">
    <subcellularLocation>
        <location evidence="7 17 24">Endoplasmic reticulum membrane</location>
        <topology evidence="7">Multi-pass membrane protein</topology>
    </subcellularLocation>
    <text evidence="17">Palmitoylation promotes localization to the peripheral endoplasmic reticulum.</text>
</comment>
<comment type="tissue specificity">
    <text evidence="25">Widely expressed.</text>
</comment>
<comment type="domain">
    <text evidence="1">The CUE domain is required for recognition of misfolded proteins such as mutant CFTR.</text>
</comment>
<comment type="domain">
    <text evidence="15">The VCP/p97-interacting motif (VIM) is sufficient for binding VCP/p97 to form a complex capable of transferring VCP/p97 from the cytosol to microsomes.</text>
</comment>
<comment type="PTM">
    <text evidence="17">Palmitoylation of the RING-type zing finger by ZDHHC6 promotes localization to the peripheral endoplasmic reticulum.</text>
</comment>
<comment type="disease" evidence="25">
    <disease id="DI-06689">
        <name>Spastic paraplegia 89, autosomal recessive</name>
        <acronym>SPG89</acronym>
        <description>A form of spastic paraplegia, a neurodegenerative disorder characterized by a slow, gradual, progressive weakness and spasticity of the lower limbs. Rate of progression and the severity of symptoms are quite variable. Initial symptoms may include difficulty with balance, weakness and stiffness in the legs, muscle spasms, and dragging the toes when walking. In some forms of the disorder, bladder symptoms (such as incontinence) may appear, or weakness and stiffness may spread to other parts of the body. SPG89 affected individuals show delayed motor development, abnormal spastic gait, and hyperreflexia of the lower limbs. Some patients may have mildly impaired intellectual development or learning difficulties. SPG89 disease onset is in the first years of life.</description>
        <dbReference type="MIM" id="620379"/>
    </disease>
    <text>The disease is caused by variants affecting the gene represented in this entry.</text>
</comment>
<comment type="sequence caution" evidence="28">
    <conflict type="miscellaneous discrepancy">
        <sequence resource="EMBL-CDS" id="AAA36671"/>
    </conflict>
    <text>Several sequencing errors.</text>
</comment>
<comment type="sequence caution" evidence="28">
    <conflict type="frameshift">
        <sequence resource="EMBL-CDS" id="AAA79362"/>
    </conflict>
</comment>
<comment type="online information" name="Atlas of Genetics and Cytogenetics in Oncology and Haematology">
    <link uri="https://atlasgeneticsoncology.org/gene/627/AMFR"/>
</comment>
<sequence length="643" mass="72996">MPLLFLERFPWPSLRTYTGLSGLALLGTIISAYRALSQPEAGPGEPDQLTASLQPEPPAPARPSAGGPRARDVAQYLLSDSLFVWVLVNTACCVLMLVAKLIQCIVFGPLRVSERQHLKDKFWNFIFYKFIFIFGVLNVQTVEEVVMWCLWFAGLVFLHLMVQLCKDRFEYLSFSPTTPMSSHGRVLSLLVAMLLSCCGLAAVCSITGYTHGMHTLAFMAAESLLVTVRTAHVILRYVIHLWDLNHEGTWEGKGTYVYYTDFVMELTLLSLDLMHHIHMLLFGNIWLSMASLVIFMQLRYLFHEVQRRIRRHKNYLRVVGNMEARFAVATPEELAVNNDDCAICWDSMQAARKLPCGHLFHNSCLRSWLEQDTSCPTCRMSLNIADNNRVREEHQGENLDENLVPVAAAEGRPRLNQHNHFFHFDGSRIASWLPSFSVEVMHTTNILGITQASNSQLNAMAHQIQEMFPQVPYHLVLQDLQLTRSVEITTDNILEGRIQVPFPTQRSDSIRPALNSPVERPSSDQEEGETSAQTERVPLDLSPRLEETLDFGEVEVEPSEVEDFEARGSRFSKSADERQRMLVQRKDELLQQARKRFLNKSSEDDAASESFLPSEGASSDPVTLRRRMLAAAAERRLQKQQTS</sequence>
<keyword id="KW-0002">3D-structure</keyword>
<keyword id="KW-0225">Disease variant</keyword>
<keyword id="KW-0256">Endoplasmic reticulum</keyword>
<keyword id="KW-0890">Hereditary spastic paraplegia</keyword>
<keyword id="KW-0449">Lipoprotein</keyword>
<keyword id="KW-0472">Membrane</keyword>
<keyword id="KW-0479">Metal-binding</keyword>
<keyword id="KW-0523">Neurodegeneration</keyword>
<keyword id="KW-0564">Palmitate</keyword>
<keyword id="KW-0597">Phosphoprotein</keyword>
<keyword id="KW-1267">Proteomics identification</keyword>
<keyword id="KW-0675">Receptor</keyword>
<keyword id="KW-1185">Reference proteome</keyword>
<keyword id="KW-0808">Transferase</keyword>
<keyword id="KW-0812">Transmembrane</keyword>
<keyword id="KW-1133">Transmembrane helix</keyword>
<keyword id="KW-0833">Ubl conjugation pathway</keyword>
<keyword id="KW-0879">Wnt signaling pathway</keyword>
<keyword id="KW-0862">Zinc</keyword>
<keyword id="KW-0863">Zinc-finger</keyword>
<accession>Q9UKV5</accession>
<accession>P26442</accession>
<accession>Q8IZ70</accession>